<name>RK33_BRADI</name>
<comment type="subcellular location">
    <subcellularLocation>
        <location>Plastid</location>
        <location>Chloroplast</location>
    </subcellularLocation>
</comment>
<comment type="similarity">
    <text evidence="1">Belongs to the bacterial ribosomal protein bL33 family.</text>
</comment>
<evidence type="ECO:0000255" key="1">
    <source>
        <dbReference type="HAMAP-Rule" id="MF_00294"/>
    </source>
</evidence>
<evidence type="ECO:0000305" key="2"/>
<proteinExistence type="inferred from homology"/>
<feature type="chain" id="PRO_0000356786" description="Large ribosomal subunit protein bL33c">
    <location>
        <begin position="1"/>
        <end position="66"/>
    </location>
</feature>
<organism>
    <name type="scientific">Brachypodium distachyon</name>
    <name type="common">Purple false brome</name>
    <name type="synonym">Trachynia distachya</name>
    <dbReference type="NCBI Taxonomy" id="15368"/>
    <lineage>
        <taxon>Eukaryota</taxon>
        <taxon>Viridiplantae</taxon>
        <taxon>Streptophyta</taxon>
        <taxon>Embryophyta</taxon>
        <taxon>Tracheophyta</taxon>
        <taxon>Spermatophyta</taxon>
        <taxon>Magnoliopsida</taxon>
        <taxon>Liliopsida</taxon>
        <taxon>Poales</taxon>
        <taxon>Poaceae</taxon>
        <taxon>BOP clade</taxon>
        <taxon>Pooideae</taxon>
        <taxon>Stipodae</taxon>
        <taxon>Brachypodieae</taxon>
        <taxon>Brachypodium</taxon>
    </lineage>
</organism>
<protein>
    <recommendedName>
        <fullName evidence="1">Large ribosomal subunit protein bL33c</fullName>
    </recommendedName>
    <alternativeName>
        <fullName evidence="2">50S ribosomal protein L33, chloroplastic</fullName>
    </alternativeName>
</protein>
<sequence>MAKGKDVRIRVILECISCVRKGANEESTGISRYSTEKNRHNTPGQLEFKKFCRYCRKHTTHHEIKK</sequence>
<accession>B3TN70</accession>
<dbReference type="EMBL" id="EU325680">
    <property type="protein sequence ID" value="ACF08659.1"/>
    <property type="molecule type" value="Genomic_DNA"/>
</dbReference>
<dbReference type="RefSeq" id="YP_002000506.1">
    <property type="nucleotide sequence ID" value="NC_011032.1"/>
</dbReference>
<dbReference type="FunCoup" id="B3TN70">
    <property type="interactions" value="45"/>
</dbReference>
<dbReference type="STRING" id="15368.B3TN70"/>
<dbReference type="EnsemblPlants" id="KQK18183">
    <property type="protein sequence ID" value="KQK18183"/>
    <property type="gene ID" value="BRADI_1g39217v3"/>
</dbReference>
<dbReference type="GeneID" id="6439774"/>
<dbReference type="Gramene" id="KQK18183">
    <property type="protein sequence ID" value="KQK18183"/>
    <property type="gene ID" value="BRADI_1g39217v3"/>
</dbReference>
<dbReference type="KEGG" id="bdi:6439774"/>
<dbReference type="eggNOG" id="ENOG502S7HT">
    <property type="taxonomic scope" value="Eukaryota"/>
</dbReference>
<dbReference type="HOGENOM" id="CLU_190949_3_0_1"/>
<dbReference type="InParanoid" id="B3TN70"/>
<dbReference type="OMA" id="ECTEHKA"/>
<dbReference type="Proteomes" id="UP000008810">
    <property type="component" value="Unplaced"/>
</dbReference>
<dbReference type="GO" id="GO:0009507">
    <property type="term" value="C:chloroplast"/>
    <property type="evidence" value="ECO:0007669"/>
    <property type="project" value="UniProtKB-SubCell"/>
</dbReference>
<dbReference type="GO" id="GO:1990904">
    <property type="term" value="C:ribonucleoprotein complex"/>
    <property type="evidence" value="ECO:0007669"/>
    <property type="project" value="UniProtKB-KW"/>
</dbReference>
<dbReference type="GO" id="GO:0005840">
    <property type="term" value="C:ribosome"/>
    <property type="evidence" value="ECO:0007669"/>
    <property type="project" value="UniProtKB-KW"/>
</dbReference>
<dbReference type="GO" id="GO:0003735">
    <property type="term" value="F:structural constituent of ribosome"/>
    <property type="evidence" value="ECO:0007669"/>
    <property type="project" value="InterPro"/>
</dbReference>
<dbReference type="GO" id="GO:0006412">
    <property type="term" value="P:translation"/>
    <property type="evidence" value="ECO:0007669"/>
    <property type="project" value="UniProtKB-UniRule"/>
</dbReference>
<dbReference type="Gene3D" id="2.20.28.120">
    <property type="entry name" value="Ribosomal protein L33"/>
    <property type="match status" value="1"/>
</dbReference>
<dbReference type="HAMAP" id="MF_00294">
    <property type="entry name" value="Ribosomal_bL33"/>
    <property type="match status" value="1"/>
</dbReference>
<dbReference type="InterPro" id="IPR001705">
    <property type="entry name" value="Ribosomal_bL33"/>
</dbReference>
<dbReference type="InterPro" id="IPR018264">
    <property type="entry name" value="Ribosomal_bL33_CS"/>
</dbReference>
<dbReference type="InterPro" id="IPR038584">
    <property type="entry name" value="Ribosomal_bL33_sf"/>
</dbReference>
<dbReference type="InterPro" id="IPR011332">
    <property type="entry name" value="Ribosomal_zn-bd"/>
</dbReference>
<dbReference type="NCBIfam" id="NF001764">
    <property type="entry name" value="PRK00504.1"/>
    <property type="match status" value="1"/>
</dbReference>
<dbReference type="NCBIfam" id="NF001860">
    <property type="entry name" value="PRK00595.1"/>
    <property type="match status" value="1"/>
</dbReference>
<dbReference type="NCBIfam" id="TIGR01023">
    <property type="entry name" value="rpmG_bact"/>
    <property type="match status" value="1"/>
</dbReference>
<dbReference type="PANTHER" id="PTHR43168">
    <property type="entry name" value="50S RIBOSOMAL PROTEIN L33, CHLOROPLASTIC"/>
    <property type="match status" value="1"/>
</dbReference>
<dbReference type="PANTHER" id="PTHR43168:SF2">
    <property type="entry name" value="LARGE RIBOSOMAL SUBUNIT PROTEIN BL33C"/>
    <property type="match status" value="1"/>
</dbReference>
<dbReference type="Pfam" id="PF00471">
    <property type="entry name" value="Ribosomal_L33"/>
    <property type="match status" value="1"/>
</dbReference>
<dbReference type="SUPFAM" id="SSF57829">
    <property type="entry name" value="Zn-binding ribosomal proteins"/>
    <property type="match status" value="1"/>
</dbReference>
<dbReference type="PROSITE" id="PS00582">
    <property type="entry name" value="RIBOSOMAL_L33"/>
    <property type="match status" value="1"/>
</dbReference>
<keyword id="KW-0150">Chloroplast</keyword>
<keyword id="KW-0934">Plastid</keyword>
<keyword id="KW-1185">Reference proteome</keyword>
<keyword id="KW-0687">Ribonucleoprotein</keyword>
<keyword id="KW-0689">Ribosomal protein</keyword>
<gene>
    <name evidence="1" type="primary">rpl33</name>
</gene>
<geneLocation type="chloroplast"/>
<reference key="1">
    <citation type="journal article" date="2008" name="BMC Res. Notes">
        <title>The complete chloroplast genome sequence of Brachypodium distachyon: sequence comparison and phylogenetic analysis of eight grass plastomes.</title>
        <authorList>
            <person name="Bortiri E."/>
            <person name="Coleman-Derr D."/>
            <person name="Lazo G.R."/>
            <person name="Anderson O.D."/>
            <person name="Gu Y.Q."/>
        </authorList>
    </citation>
    <scope>NUCLEOTIDE SEQUENCE [LARGE SCALE GENOMIC DNA]</scope>
    <source>
        <strain>cv. Bd21</strain>
    </source>
</reference>